<reference key="1">
    <citation type="submission" date="2008-04" db="EMBL/GenBank/DDBJ databases">
        <title>Complete sequence of chromosome 2 of Burkholderia ambifaria MC40-6.</title>
        <authorList>
            <person name="Copeland A."/>
            <person name="Lucas S."/>
            <person name="Lapidus A."/>
            <person name="Glavina del Rio T."/>
            <person name="Dalin E."/>
            <person name="Tice H."/>
            <person name="Pitluck S."/>
            <person name="Chain P."/>
            <person name="Malfatti S."/>
            <person name="Shin M."/>
            <person name="Vergez L."/>
            <person name="Lang D."/>
            <person name="Schmutz J."/>
            <person name="Larimer F."/>
            <person name="Land M."/>
            <person name="Hauser L."/>
            <person name="Kyrpides N."/>
            <person name="Lykidis A."/>
            <person name="Ramette A."/>
            <person name="Konstantinidis K."/>
            <person name="Tiedje J."/>
            <person name="Richardson P."/>
        </authorList>
    </citation>
    <scope>NUCLEOTIDE SEQUENCE [LARGE SCALE GENOMIC DNA]</scope>
    <source>
        <strain>MC40-6</strain>
    </source>
</reference>
<protein>
    <recommendedName>
        <fullName evidence="1">1-deoxy-D-xylulose-5-phosphate synthase</fullName>
        <ecNumber evidence="1">2.2.1.7</ecNumber>
    </recommendedName>
    <alternativeName>
        <fullName evidence="1">1-deoxyxylulose-5-phosphate synthase</fullName>
        <shortName evidence="1">DXP synthase</shortName>
        <shortName evidence="1">DXPS</shortName>
    </alternativeName>
</protein>
<keyword id="KW-0414">Isoprene biosynthesis</keyword>
<keyword id="KW-0460">Magnesium</keyword>
<keyword id="KW-0479">Metal-binding</keyword>
<keyword id="KW-0784">Thiamine biosynthesis</keyword>
<keyword id="KW-0786">Thiamine pyrophosphate</keyword>
<keyword id="KW-0808">Transferase</keyword>
<gene>
    <name evidence="1" type="primary">dxs</name>
    <name type="ordered locus">BamMC406_3776</name>
</gene>
<feature type="chain" id="PRO_1000115725" description="1-deoxy-D-xylulose-5-phosphate synthase">
    <location>
        <begin position="1"/>
        <end position="634"/>
    </location>
</feature>
<feature type="binding site" evidence="1">
    <location>
        <position position="74"/>
    </location>
    <ligand>
        <name>thiamine diphosphate</name>
        <dbReference type="ChEBI" id="CHEBI:58937"/>
    </ligand>
</feature>
<feature type="binding site" evidence="1">
    <location>
        <begin position="115"/>
        <end position="117"/>
    </location>
    <ligand>
        <name>thiamine diphosphate</name>
        <dbReference type="ChEBI" id="CHEBI:58937"/>
    </ligand>
</feature>
<feature type="binding site" evidence="1">
    <location>
        <position position="146"/>
    </location>
    <ligand>
        <name>Mg(2+)</name>
        <dbReference type="ChEBI" id="CHEBI:18420"/>
    </ligand>
</feature>
<feature type="binding site" evidence="1">
    <location>
        <begin position="147"/>
        <end position="148"/>
    </location>
    <ligand>
        <name>thiamine diphosphate</name>
        <dbReference type="ChEBI" id="CHEBI:58937"/>
    </ligand>
</feature>
<feature type="binding site" evidence="1">
    <location>
        <position position="176"/>
    </location>
    <ligand>
        <name>Mg(2+)</name>
        <dbReference type="ChEBI" id="CHEBI:18420"/>
    </ligand>
</feature>
<feature type="binding site" evidence="1">
    <location>
        <position position="176"/>
    </location>
    <ligand>
        <name>thiamine diphosphate</name>
        <dbReference type="ChEBI" id="CHEBI:58937"/>
    </ligand>
</feature>
<feature type="binding site" evidence="1">
    <location>
        <position position="283"/>
    </location>
    <ligand>
        <name>thiamine diphosphate</name>
        <dbReference type="ChEBI" id="CHEBI:58937"/>
    </ligand>
</feature>
<feature type="binding site" evidence="1">
    <location>
        <position position="365"/>
    </location>
    <ligand>
        <name>thiamine diphosphate</name>
        <dbReference type="ChEBI" id="CHEBI:58937"/>
    </ligand>
</feature>
<evidence type="ECO:0000255" key="1">
    <source>
        <dbReference type="HAMAP-Rule" id="MF_00315"/>
    </source>
</evidence>
<dbReference type="EC" id="2.2.1.7" evidence="1"/>
<dbReference type="EMBL" id="CP001026">
    <property type="protein sequence ID" value="ACB66243.1"/>
    <property type="molecule type" value="Genomic_DNA"/>
</dbReference>
<dbReference type="RefSeq" id="WP_012365632.1">
    <property type="nucleotide sequence ID" value="NC_010552.1"/>
</dbReference>
<dbReference type="SMR" id="B1Z1G2"/>
<dbReference type="KEGG" id="bac:BamMC406_3776"/>
<dbReference type="HOGENOM" id="CLU_009227_1_4_4"/>
<dbReference type="OrthoDB" id="9803371at2"/>
<dbReference type="UniPathway" id="UPA00064">
    <property type="reaction ID" value="UER00091"/>
</dbReference>
<dbReference type="Proteomes" id="UP000001680">
    <property type="component" value="Chromosome 2"/>
</dbReference>
<dbReference type="GO" id="GO:0005829">
    <property type="term" value="C:cytosol"/>
    <property type="evidence" value="ECO:0007669"/>
    <property type="project" value="TreeGrafter"/>
</dbReference>
<dbReference type="GO" id="GO:0008661">
    <property type="term" value="F:1-deoxy-D-xylulose-5-phosphate synthase activity"/>
    <property type="evidence" value="ECO:0007669"/>
    <property type="project" value="UniProtKB-UniRule"/>
</dbReference>
<dbReference type="GO" id="GO:0000287">
    <property type="term" value="F:magnesium ion binding"/>
    <property type="evidence" value="ECO:0007669"/>
    <property type="project" value="UniProtKB-UniRule"/>
</dbReference>
<dbReference type="GO" id="GO:0030976">
    <property type="term" value="F:thiamine pyrophosphate binding"/>
    <property type="evidence" value="ECO:0007669"/>
    <property type="project" value="UniProtKB-UniRule"/>
</dbReference>
<dbReference type="GO" id="GO:0052865">
    <property type="term" value="P:1-deoxy-D-xylulose 5-phosphate biosynthetic process"/>
    <property type="evidence" value="ECO:0007669"/>
    <property type="project" value="UniProtKB-UniPathway"/>
</dbReference>
<dbReference type="GO" id="GO:0019288">
    <property type="term" value="P:isopentenyl diphosphate biosynthetic process, methylerythritol 4-phosphate pathway"/>
    <property type="evidence" value="ECO:0007669"/>
    <property type="project" value="TreeGrafter"/>
</dbReference>
<dbReference type="GO" id="GO:0016114">
    <property type="term" value="P:terpenoid biosynthetic process"/>
    <property type="evidence" value="ECO:0007669"/>
    <property type="project" value="UniProtKB-UniRule"/>
</dbReference>
<dbReference type="GO" id="GO:0009228">
    <property type="term" value="P:thiamine biosynthetic process"/>
    <property type="evidence" value="ECO:0007669"/>
    <property type="project" value="UniProtKB-UniRule"/>
</dbReference>
<dbReference type="CDD" id="cd02007">
    <property type="entry name" value="TPP_DXS"/>
    <property type="match status" value="1"/>
</dbReference>
<dbReference type="CDD" id="cd07033">
    <property type="entry name" value="TPP_PYR_DXS_TK_like"/>
    <property type="match status" value="1"/>
</dbReference>
<dbReference type="FunFam" id="3.40.50.920:FF:000002">
    <property type="entry name" value="1-deoxy-D-xylulose-5-phosphate synthase"/>
    <property type="match status" value="1"/>
</dbReference>
<dbReference type="FunFam" id="3.40.50.970:FF:000005">
    <property type="entry name" value="1-deoxy-D-xylulose-5-phosphate synthase"/>
    <property type="match status" value="1"/>
</dbReference>
<dbReference type="Gene3D" id="3.40.50.920">
    <property type="match status" value="1"/>
</dbReference>
<dbReference type="Gene3D" id="3.40.50.970">
    <property type="match status" value="2"/>
</dbReference>
<dbReference type="HAMAP" id="MF_00315">
    <property type="entry name" value="DXP_synth"/>
    <property type="match status" value="1"/>
</dbReference>
<dbReference type="InterPro" id="IPR005477">
    <property type="entry name" value="Dxylulose-5-P_synthase"/>
</dbReference>
<dbReference type="InterPro" id="IPR029061">
    <property type="entry name" value="THDP-binding"/>
</dbReference>
<dbReference type="InterPro" id="IPR009014">
    <property type="entry name" value="Transketo_C/PFOR_II"/>
</dbReference>
<dbReference type="InterPro" id="IPR005475">
    <property type="entry name" value="Transketolase-like_Pyr-bd"/>
</dbReference>
<dbReference type="InterPro" id="IPR020826">
    <property type="entry name" value="Transketolase_BS"/>
</dbReference>
<dbReference type="InterPro" id="IPR033248">
    <property type="entry name" value="Transketolase_C"/>
</dbReference>
<dbReference type="InterPro" id="IPR049557">
    <property type="entry name" value="Transketolase_CS"/>
</dbReference>
<dbReference type="NCBIfam" id="TIGR00204">
    <property type="entry name" value="dxs"/>
    <property type="match status" value="1"/>
</dbReference>
<dbReference type="NCBIfam" id="NF003933">
    <property type="entry name" value="PRK05444.2-2"/>
    <property type="match status" value="1"/>
</dbReference>
<dbReference type="PANTHER" id="PTHR43322">
    <property type="entry name" value="1-D-DEOXYXYLULOSE 5-PHOSPHATE SYNTHASE-RELATED"/>
    <property type="match status" value="1"/>
</dbReference>
<dbReference type="PANTHER" id="PTHR43322:SF5">
    <property type="entry name" value="1-DEOXY-D-XYLULOSE-5-PHOSPHATE SYNTHASE, CHLOROPLASTIC"/>
    <property type="match status" value="1"/>
</dbReference>
<dbReference type="Pfam" id="PF13292">
    <property type="entry name" value="DXP_synthase_N"/>
    <property type="match status" value="1"/>
</dbReference>
<dbReference type="Pfam" id="PF02779">
    <property type="entry name" value="Transket_pyr"/>
    <property type="match status" value="1"/>
</dbReference>
<dbReference type="Pfam" id="PF02780">
    <property type="entry name" value="Transketolase_C"/>
    <property type="match status" value="1"/>
</dbReference>
<dbReference type="SMART" id="SM00861">
    <property type="entry name" value="Transket_pyr"/>
    <property type="match status" value="1"/>
</dbReference>
<dbReference type="SUPFAM" id="SSF52518">
    <property type="entry name" value="Thiamin diphosphate-binding fold (THDP-binding)"/>
    <property type="match status" value="2"/>
</dbReference>
<dbReference type="SUPFAM" id="SSF52922">
    <property type="entry name" value="TK C-terminal domain-like"/>
    <property type="match status" value="1"/>
</dbReference>
<dbReference type="PROSITE" id="PS00801">
    <property type="entry name" value="TRANSKETOLASE_1"/>
    <property type="match status" value="1"/>
</dbReference>
<dbReference type="PROSITE" id="PS00802">
    <property type="entry name" value="TRANSKETOLASE_2"/>
    <property type="match status" value="1"/>
</dbReference>
<comment type="function">
    <text evidence="1">Catalyzes the acyloin condensation reaction between C atoms 2 and 3 of pyruvate and glyceraldehyde 3-phosphate to yield 1-deoxy-D-xylulose-5-phosphate (DXP).</text>
</comment>
<comment type="catalytic activity">
    <reaction evidence="1">
        <text>D-glyceraldehyde 3-phosphate + pyruvate + H(+) = 1-deoxy-D-xylulose 5-phosphate + CO2</text>
        <dbReference type="Rhea" id="RHEA:12605"/>
        <dbReference type="ChEBI" id="CHEBI:15361"/>
        <dbReference type="ChEBI" id="CHEBI:15378"/>
        <dbReference type="ChEBI" id="CHEBI:16526"/>
        <dbReference type="ChEBI" id="CHEBI:57792"/>
        <dbReference type="ChEBI" id="CHEBI:59776"/>
        <dbReference type="EC" id="2.2.1.7"/>
    </reaction>
</comment>
<comment type="cofactor">
    <cofactor evidence="1">
        <name>Mg(2+)</name>
        <dbReference type="ChEBI" id="CHEBI:18420"/>
    </cofactor>
    <text evidence="1">Binds 1 Mg(2+) ion per subunit.</text>
</comment>
<comment type="cofactor">
    <cofactor evidence="1">
        <name>thiamine diphosphate</name>
        <dbReference type="ChEBI" id="CHEBI:58937"/>
    </cofactor>
    <text evidence="1">Binds 1 thiamine pyrophosphate per subunit.</text>
</comment>
<comment type="pathway">
    <text evidence="1">Metabolic intermediate biosynthesis; 1-deoxy-D-xylulose 5-phosphate biosynthesis; 1-deoxy-D-xylulose 5-phosphate from D-glyceraldehyde 3-phosphate and pyruvate: step 1/1.</text>
</comment>
<comment type="subunit">
    <text evidence="1">Homodimer.</text>
</comment>
<comment type="similarity">
    <text evidence="1">Belongs to the transketolase family. DXPS subfamily.</text>
</comment>
<sequence length="634" mass="68639">MYDLLKTIDDPADLRRLDRRQLQPLADELRAFVLDSVSKTGGHLSSNLGTVELTIALHYVFNTPNDRIVWDVGHQTYPHKILTGRRDQMHSLRQYDGISGFPRRSESEYDTFGTAHSSTSISAALGMAIGSQLNGDDRFSIAVIGDGAMTAGMAFEAMNNAGVSEDAKLLVILNDNDMSISPPVGALNRHLARLMSGRFYAAARAGVERVLSVAPPVLELARKLEEHAKGMVVPATLFEEFGFNYIGPIDGHDLDSLIPTLQNIRELRGPQFLHVVTKKGQGYKLAEADPVLYHGPGKFNPAEGIKPSPTPAKKTYTQVFGEWLCDEAERDSRVVGITPAMREGSGMVEFEKRFKDRYYDVGIAEQHAVTFAGGLATEGLKPVVAIYSTFLQRAYDQLIHDVALQNLPVVFAIDRAGLVGADGATHAGAYDLAFMRCIPNMTIMAASDENECRQMLHTALQQPNPTAVRYPRGAGTGVATVKEFTEIPLGKGEVRRRTSQPEGKRVAILAFGTMVAPSLAAGEELDATVANMRFVKPVDAALVRELAETHDYLVTVEEGCVMGGAGSACVEALMESGVIRPVIQLGLPDQFIDHGDPAKLLAQCGLDGAGIAKSIRERFLSPAADVADQAKRVA</sequence>
<name>DXS_BURA4</name>
<organism>
    <name type="scientific">Burkholderia ambifaria (strain MC40-6)</name>
    <dbReference type="NCBI Taxonomy" id="398577"/>
    <lineage>
        <taxon>Bacteria</taxon>
        <taxon>Pseudomonadati</taxon>
        <taxon>Pseudomonadota</taxon>
        <taxon>Betaproteobacteria</taxon>
        <taxon>Burkholderiales</taxon>
        <taxon>Burkholderiaceae</taxon>
        <taxon>Burkholderia</taxon>
        <taxon>Burkholderia cepacia complex</taxon>
    </lineage>
</organism>
<proteinExistence type="inferred from homology"/>
<accession>B1Z1G2</accession>